<protein>
    <recommendedName>
        <fullName evidence="1">Large ribosomal subunit protein bL31</fullName>
    </recommendedName>
    <alternativeName>
        <fullName evidence="2">50S ribosomal protein L31</fullName>
    </alternativeName>
</protein>
<evidence type="ECO:0000255" key="1">
    <source>
        <dbReference type="HAMAP-Rule" id="MF_00501"/>
    </source>
</evidence>
<evidence type="ECO:0000305" key="2"/>
<organism>
    <name type="scientific">Clostridium perfringens (strain 13 / Type A)</name>
    <dbReference type="NCBI Taxonomy" id="195102"/>
    <lineage>
        <taxon>Bacteria</taxon>
        <taxon>Bacillati</taxon>
        <taxon>Bacillota</taxon>
        <taxon>Clostridia</taxon>
        <taxon>Eubacteriales</taxon>
        <taxon>Clostridiaceae</taxon>
        <taxon>Clostridium</taxon>
    </lineage>
</organism>
<name>RL31_CLOPE</name>
<proteinExistence type="inferred from homology"/>
<feature type="chain" id="PRO_0000173097" description="Large ribosomal subunit protein bL31">
    <location>
        <begin position="1"/>
        <end position="68"/>
    </location>
</feature>
<feature type="binding site" evidence="1">
    <location>
        <position position="17"/>
    </location>
    <ligand>
        <name>Zn(2+)</name>
        <dbReference type="ChEBI" id="CHEBI:29105"/>
    </ligand>
</feature>
<feature type="binding site" evidence="1">
    <location>
        <position position="19"/>
    </location>
    <ligand>
        <name>Zn(2+)</name>
        <dbReference type="ChEBI" id="CHEBI:29105"/>
    </ligand>
</feature>
<feature type="binding site" evidence="1">
    <location>
        <position position="37"/>
    </location>
    <ligand>
        <name>Zn(2+)</name>
        <dbReference type="ChEBI" id="CHEBI:29105"/>
    </ligand>
</feature>
<feature type="binding site" evidence="1">
    <location>
        <position position="40"/>
    </location>
    <ligand>
        <name>Zn(2+)</name>
        <dbReference type="ChEBI" id="CHEBI:29105"/>
    </ligand>
</feature>
<sequence length="68" mass="7721">MRQGIHPEYHHDTVVKCACGNTFTTGSVKPELKVEICSKCHPFFTGKQKIVDVGGRVDKFNKRFNLNK</sequence>
<reference key="1">
    <citation type="journal article" date="2002" name="Proc. Natl. Acad. Sci. U.S.A.">
        <title>Complete genome sequence of Clostridium perfringens, an anaerobic flesh-eater.</title>
        <authorList>
            <person name="Shimizu T."/>
            <person name="Ohtani K."/>
            <person name="Hirakawa H."/>
            <person name="Ohshima K."/>
            <person name="Yamashita A."/>
            <person name="Shiba T."/>
            <person name="Ogasawara N."/>
            <person name="Hattori M."/>
            <person name="Kuhara S."/>
            <person name="Hayashi H."/>
        </authorList>
    </citation>
    <scope>NUCLEOTIDE SEQUENCE [LARGE SCALE GENOMIC DNA]</scope>
    <source>
        <strain>13 / Type A</strain>
    </source>
</reference>
<accession>Q8XIB6</accession>
<comment type="function">
    <text evidence="1">Binds the 23S rRNA.</text>
</comment>
<comment type="cofactor">
    <cofactor evidence="1">
        <name>Zn(2+)</name>
        <dbReference type="ChEBI" id="CHEBI:29105"/>
    </cofactor>
    <text evidence="1">Binds 1 zinc ion per subunit.</text>
</comment>
<comment type="subunit">
    <text evidence="1">Part of the 50S ribosomal subunit.</text>
</comment>
<comment type="similarity">
    <text evidence="1">Belongs to the bacterial ribosomal protein bL31 family. Type A subfamily.</text>
</comment>
<keyword id="KW-0479">Metal-binding</keyword>
<keyword id="KW-1185">Reference proteome</keyword>
<keyword id="KW-0687">Ribonucleoprotein</keyword>
<keyword id="KW-0689">Ribosomal protein</keyword>
<keyword id="KW-0694">RNA-binding</keyword>
<keyword id="KW-0699">rRNA-binding</keyword>
<keyword id="KW-0862">Zinc</keyword>
<dbReference type="EMBL" id="BA000016">
    <property type="protein sequence ID" value="BAB81911.1"/>
    <property type="molecule type" value="Genomic_DNA"/>
</dbReference>
<dbReference type="RefSeq" id="WP_003452406.1">
    <property type="nucleotide sequence ID" value="NC_003366.1"/>
</dbReference>
<dbReference type="SMR" id="Q8XIB6"/>
<dbReference type="STRING" id="195102.gene:10491484"/>
<dbReference type="GeneID" id="93001253"/>
<dbReference type="KEGG" id="cpe:CPE2205"/>
<dbReference type="HOGENOM" id="CLU_114306_4_3_9"/>
<dbReference type="Proteomes" id="UP000000818">
    <property type="component" value="Chromosome"/>
</dbReference>
<dbReference type="GO" id="GO:1990904">
    <property type="term" value="C:ribonucleoprotein complex"/>
    <property type="evidence" value="ECO:0007669"/>
    <property type="project" value="UniProtKB-KW"/>
</dbReference>
<dbReference type="GO" id="GO:0005840">
    <property type="term" value="C:ribosome"/>
    <property type="evidence" value="ECO:0007669"/>
    <property type="project" value="UniProtKB-KW"/>
</dbReference>
<dbReference type="GO" id="GO:0046872">
    <property type="term" value="F:metal ion binding"/>
    <property type="evidence" value="ECO:0007669"/>
    <property type="project" value="UniProtKB-KW"/>
</dbReference>
<dbReference type="GO" id="GO:0019843">
    <property type="term" value="F:rRNA binding"/>
    <property type="evidence" value="ECO:0007669"/>
    <property type="project" value="UniProtKB-KW"/>
</dbReference>
<dbReference type="GO" id="GO:0003735">
    <property type="term" value="F:structural constituent of ribosome"/>
    <property type="evidence" value="ECO:0007669"/>
    <property type="project" value="InterPro"/>
</dbReference>
<dbReference type="GO" id="GO:0006412">
    <property type="term" value="P:translation"/>
    <property type="evidence" value="ECO:0007669"/>
    <property type="project" value="UniProtKB-UniRule"/>
</dbReference>
<dbReference type="Gene3D" id="4.10.830.30">
    <property type="entry name" value="Ribosomal protein L31"/>
    <property type="match status" value="1"/>
</dbReference>
<dbReference type="HAMAP" id="MF_00501">
    <property type="entry name" value="Ribosomal_bL31_1"/>
    <property type="match status" value="1"/>
</dbReference>
<dbReference type="InterPro" id="IPR034704">
    <property type="entry name" value="Ribosomal_bL28/bL31-like_sf"/>
</dbReference>
<dbReference type="InterPro" id="IPR002150">
    <property type="entry name" value="Ribosomal_bL31"/>
</dbReference>
<dbReference type="InterPro" id="IPR027491">
    <property type="entry name" value="Ribosomal_bL31_A"/>
</dbReference>
<dbReference type="InterPro" id="IPR042105">
    <property type="entry name" value="Ribosomal_bL31_sf"/>
</dbReference>
<dbReference type="NCBIfam" id="TIGR00105">
    <property type="entry name" value="L31"/>
    <property type="match status" value="1"/>
</dbReference>
<dbReference type="NCBIfam" id="NF000612">
    <property type="entry name" value="PRK00019.1"/>
    <property type="match status" value="1"/>
</dbReference>
<dbReference type="NCBIfam" id="NF001809">
    <property type="entry name" value="PRK00528.1"/>
    <property type="match status" value="1"/>
</dbReference>
<dbReference type="PANTHER" id="PTHR33280">
    <property type="entry name" value="50S RIBOSOMAL PROTEIN L31, CHLOROPLASTIC"/>
    <property type="match status" value="1"/>
</dbReference>
<dbReference type="PANTHER" id="PTHR33280:SF1">
    <property type="entry name" value="LARGE RIBOSOMAL SUBUNIT PROTEIN BL31C"/>
    <property type="match status" value="1"/>
</dbReference>
<dbReference type="Pfam" id="PF01197">
    <property type="entry name" value="Ribosomal_L31"/>
    <property type="match status" value="1"/>
</dbReference>
<dbReference type="PRINTS" id="PR01249">
    <property type="entry name" value="RIBOSOMALL31"/>
</dbReference>
<dbReference type="SUPFAM" id="SSF143800">
    <property type="entry name" value="L28p-like"/>
    <property type="match status" value="1"/>
</dbReference>
<dbReference type="PROSITE" id="PS01143">
    <property type="entry name" value="RIBOSOMAL_L31"/>
    <property type="match status" value="1"/>
</dbReference>
<gene>
    <name evidence="1" type="primary">rpmE</name>
    <name type="ordered locus">CPE2205</name>
</gene>